<protein>
    <recommendedName>
        <fullName>Hemoglobin subunit epsilon</fullName>
    </recommendedName>
    <alternativeName>
        <fullName>Beta-4 globin</fullName>
    </alternativeName>
    <alternativeName>
        <fullName>Epsilon-globin</fullName>
    </alternativeName>
    <alternativeName>
        <fullName>Hemoglobin epsilon chain</fullName>
    </alternativeName>
</protein>
<proteinExistence type="evidence at transcript level"/>
<feature type="chain" id="PRO_0000053226" description="Hemoglobin subunit epsilon">
    <location>
        <begin position="1"/>
        <end position="147"/>
    </location>
</feature>
<feature type="domain" description="Globin" evidence="2">
    <location>
        <begin position="3"/>
        <end position="147"/>
    </location>
</feature>
<feature type="binding site" description="distal binding residue" evidence="2">
    <location>
        <position position="64"/>
    </location>
    <ligand>
        <name>heme b</name>
        <dbReference type="ChEBI" id="CHEBI:60344"/>
    </ligand>
    <ligandPart>
        <name>Fe</name>
        <dbReference type="ChEBI" id="CHEBI:18248"/>
    </ligandPart>
</feature>
<feature type="binding site" description="proximal binding residue" evidence="2">
    <location>
        <position position="93"/>
    </location>
    <ligand>
        <name>heme b</name>
        <dbReference type="ChEBI" id="CHEBI:60344"/>
    </ligand>
    <ligandPart>
        <name>Fe</name>
        <dbReference type="ChEBI" id="CHEBI:18248"/>
    </ligandPart>
</feature>
<feature type="modified residue" description="Phosphoserine" evidence="1">
    <location>
        <position position="51"/>
    </location>
</feature>
<comment type="function">
    <text>Hemoglobin epsilon chain is a beta-type chain found in early embryos.</text>
</comment>
<comment type="tissue specificity">
    <text>Red blood cells.</text>
</comment>
<comment type="similarity">
    <text evidence="2">Belongs to the globin family.</text>
</comment>
<accession>P02103</accession>
<evidence type="ECO:0000250" key="1">
    <source>
        <dbReference type="UniProtKB" id="P02100"/>
    </source>
</evidence>
<evidence type="ECO:0000255" key="2">
    <source>
        <dbReference type="PROSITE-ProRule" id="PRU00238"/>
    </source>
</evidence>
<organism>
    <name type="scientific">Oryctolagus cuniculus</name>
    <name type="common">Rabbit</name>
    <dbReference type="NCBI Taxonomy" id="9986"/>
    <lineage>
        <taxon>Eukaryota</taxon>
        <taxon>Metazoa</taxon>
        <taxon>Chordata</taxon>
        <taxon>Craniata</taxon>
        <taxon>Vertebrata</taxon>
        <taxon>Euteleostomi</taxon>
        <taxon>Mammalia</taxon>
        <taxon>Eutheria</taxon>
        <taxon>Euarchontoglires</taxon>
        <taxon>Glires</taxon>
        <taxon>Lagomorpha</taxon>
        <taxon>Leporidae</taxon>
        <taxon>Oryctolagus</taxon>
    </lineage>
</organism>
<keyword id="KW-0349">Heme</keyword>
<keyword id="KW-0408">Iron</keyword>
<keyword id="KW-0479">Metal-binding</keyword>
<keyword id="KW-0561">Oxygen transport</keyword>
<keyword id="KW-0597">Phosphoprotein</keyword>
<keyword id="KW-1185">Reference proteome</keyword>
<keyword id="KW-0813">Transport</keyword>
<gene>
    <name type="primary">HBE1</name>
</gene>
<name>HBE_RABIT</name>
<dbReference type="EMBL" id="M18818">
    <property type="protein sequence ID" value="AAA02983.1"/>
    <property type="molecule type" value="Unassigned_DNA"/>
</dbReference>
<dbReference type="EMBL" id="J00664">
    <property type="status" value="NOT_ANNOTATED_CDS"/>
    <property type="molecule type" value="Genomic_DNA"/>
</dbReference>
<dbReference type="PIR" id="A02424">
    <property type="entry name" value="HBRB4"/>
</dbReference>
<dbReference type="RefSeq" id="NP_001164975.1">
    <property type="nucleotide sequence ID" value="NM_001171504.1"/>
</dbReference>
<dbReference type="SMR" id="P02103"/>
<dbReference type="FunCoup" id="P02103">
    <property type="interactions" value="3"/>
</dbReference>
<dbReference type="PaxDb" id="9986-ENSOCUP00000018876"/>
<dbReference type="GeneID" id="100328859"/>
<dbReference type="KEGG" id="ocu:100328859"/>
<dbReference type="CTD" id="3046"/>
<dbReference type="eggNOG" id="KOG3378">
    <property type="taxonomic scope" value="Eukaryota"/>
</dbReference>
<dbReference type="InParanoid" id="P02103"/>
<dbReference type="OrthoDB" id="9886081at2759"/>
<dbReference type="Proteomes" id="UP000001811">
    <property type="component" value="Unplaced"/>
</dbReference>
<dbReference type="GO" id="GO:0072562">
    <property type="term" value="C:blood microparticle"/>
    <property type="evidence" value="ECO:0007669"/>
    <property type="project" value="TreeGrafter"/>
</dbReference>
<dbReference type="GO" id="GO:0031838">
    <property type="term" value="C:haptoglobin-hemoglobin complex"/>
    <property type="evidence" value="ECO:0007669"/>
    <property type="project" value="TreeGrafter"/>
</dbReference>
<dbReference type="GO" id="GO:0005833">
    <property type="term" value="C:hemoglobin complex"/>
    <property type="evidence" value="ECO:0007669"/>
    <property type="project" value="InterPro"/>
</dbReference>
<dbReference type="GO" id="GO:0031720">
    <property type="term" value="F:haptoglobin binding"/>
    <property type="evidence" value="ECO:0007669"/>
    <property type="project" value="TreeGrafter"/>
</dbReference>
<dbReference type="GO" id="GO:0020037">
    <property type="term" value="F:heme binding"/>
    <property type="evidence" value="ECO:0007669"/>
    <property type="project" value="InterPro"/>
</dbReference>
<dbReference type="GO" id="GO:0031721">
    <property type="term" value="F:hemoglobin alpha binding"/>
    <property type="evidence" value="ECO:0007669"/>
    <property type="project" value="TreeGrafter"/>
</dbReference>
<dbReference type="GO" id="GO:0046872">
    <property type="term" value="F:metal ion binding"/>
    <property type="evidence" value="ECO:0007669"/>
    <property type="project" value="UniProtKB-KW"/>
</dbReference>
<dbReference type="GO" id="GO:0043177">
    <property type="term" value="F:organic acid binding"/>
    <property type="evidence" value="ECO:0007669"/>
    <property type="project" value="TreeGrafter"/>
</dbReference>
<dbReference type="GO" id="GO:0019825">
    <property type="term" value="F:oxygen binding"/>
    <property type="evidence" value="ECO:0007669"/>
    <property type="project" value="InterPro"/>
</dbReference>
<dbReference type="GO" id="GO:0005344">
    <property type="term" value="F:oxygen carrier activity"/>
    <property type="evidence" value="ECO:0007669"/>
    <property type="project" value="UniProtKB-KW"/>
</dbReference>
<dbReference type="GO" id="GO:0004601">
    <property type="term" value="F:peroxidase activity"/>
    <property type="evidence" value="ECO:0007669"/>
    <property type="project" value="TreeGrafter"/>
</dbReference>
<dbReference type="GO" id="GO:0042744">
    <property type="term" value="P:hydrogen peroxide catabolic process"/>
    <property type="evidence" value="ECO:0007669"/>
    <property type="project" value="TreeGrafter"/>
</dbReference>
<dbReference type="CDD" id="cd08925">
    <property type="entry name" value="Hb-beta-like"/>
    <property type="match status" value="1"/>
</dbReference>
<dbReference type="FunFam" id="1.10.490.10:FF:000001">
    <property type="entry name" value="Hemoglobin subunit beta"/>
    <property type="match status" value="1"/>
</dbReference>
<dbReference type="Gene3D" id="1.10.490.10">
    <property type="entry name" value="Globins"/>
    <property type="match status" value="1"/>
</dbReference>
<dbReference type="InterPro" id="IPR000971">
    <property type="entry name" value="Globin"/>
</dbReference>
<dbReference type="InterPro" id="IPR009050">
    <property type="entry name" value="Globin-like_sf"/>
</dbReference>
<dbReference type="InterPro" id="IPR012292">
    <property type="entry name" value="Globin/Proto"/>
</dbReference>
<dbReference type="InterPro" id="IPR002337">
    <property type="entry name" value="Hemoglobin_b"/>
</dbReference>
<dbReference type="InterPro" id="IPR050056">
    <property type="entry name" value="Hemoglobin_oxygen_transport"/>
</dbReference>
<dbReference type="PANTHER" id="PTHR11442">
    <property type="entry name" value="HEMOGLOBIN FAMILY MEMBER"/>
    <property type="match status" value="1"/>
</dbReference>
<dbReference type="PANTHER" id="PTHR11442:SF7">
    <property type="entry name" value="HEMOGLOBIN SUBUNIT EPSILON"/>
    <property type="match status" value="1"/>
</dbReference>
<dbReference type="Pfam" id="PF00042">
    <property type="entry name" value="Globin"/>
    <property type="match status" value="1"/>
</dbReference>
<dbReference type="PRINTS" id="PR00814">
    <property type="entry name" value="BETAHAEM"/>
</dbReference>
<dbReference type="SUPFAM" id="SSF46458">
    <property type="entry name" value="Globin-like"/>
    <property type="match status" value="1"/>
</dbReference>
<dbReference type="PROSITE" id="PS01033">
    <property type="entry name" value="GLOBIN"/>
    <property type="match status" value="1"/>
</dbReference>
<sequence length="147" mass="16290">MVHFTPEEKCIISKQWGQVNIDETGGEALGRLLVVYPWTQRFFDNFGNLSSSSAIMGNPKVKAHGKKVLTSFGDAIKNMDNLKGAFAKLSELHCDKLHVDPENFKLLGNVLLIVLATHFGKEFTPEVQAAWQKLVSGVAIALAHKYH</sequence>
<reference key="1">
    <citation type="journal article" date="1983" name="J. Biol. Chem.">
        <title>The nucleotide sequence of the rabbit embryonic globin gene beta 4.</title>
        <authorList>
            <person name="Hardison R.C."/>
        </authorList>
    </citation>
    <scope>NUCLEOTIDE SEQUENCE [GENOMIC DNA]</scope>
</reference>
<reference key="2">
    <citation type="journal article" date="1989" name="J. Mol. Biol.">
        <title>Complete nucleotide sequence of the rabbit beta-like globin gene cluster. Analysis of intergenic sequences and comparison with the human beta-like globin gene cluster.</title>
        <authorList>
            <person name="Margot J.B."/>
            <person name="Demers G.W."/>
            <person name="Hardison R.C."/>
        </authorList>
    </citation>
    <scope>NUCLEOTIDE SEQUENCE</scope>
</reference>